<name>PQQA_ACICA</name>
<reference key="1">
    <citation type="journal article" date="1989" name="J. Bacteriol.">
        <title>Acinetobacter calcoaceticus genes involved in biosynthesis of the coenzyme pyrrolo-quinoline-quinone: nucleotide sequence and expression in Escherichia coli K-12.</title>
        <authorList>
            <person name="Goosen N."/>
            <person name="Horsman H.P.A."/>
            <person name="Huinen R.G.M."/>
            <person name="van de Putte P."/>
        </authorList>
    </citation>
    <scope>NUCLEOTIDE SEQUENCE [GENOMIC DNA]</scope>
    <source>
        <strain>LMD 79.41</strain>
    </source>
</reference>
<reference key="2">
    <citation type="journal article" date="1992" name="J. Bacteriol.">
        <title>A 24-amino-acid polypeptide is essential for the biosynthesis of the coenzyme pyrrolo-quinoline-quinone.</title>
        <authorList>
            <person name="Goosen N."/>
            <person name="Huinen R.G.M."/>
            <person name="van de Putte P."/>
        </authorList>
    </citation>
    <scope>FUNCTION</scope>
    <scope>MUTAGENESIS OF GLU-16 AND TYR-20</scope>
</reference>
<evidence type="ECO:0000250" key="1"/>
<evidence type="ECO:0000269" key="2">
    <source>
    </source>
</evidence>
<evidence type="ECO:0000305" key="3"/>
<organism>
    <name type="scientific">Acinetobacter calcoaceticus</name>
    <dbReference type="NCBI Taxonomy" id="471"/>
    <lineage>
        <taxon>Bacteria</taxon>
        <taxon>Pseudomonadati</taxon>
        <taxon>Pseudomonadota</taxon>
        <taxon>Gammaproteobacteria</taxon>
        <taxon>Moraxellales</taxon>
        <taxon>Moraxellaceae</taxon>
        <taxon>Acinetobacter</taxon>
        <taxon>Acinetobacter calcoaceticus/baumannii complex</taxon>
    </lineage>
</organism>
<feature type="chain" id="PRO_0000220305" description="Coenzyme PQQ synthesis protein A">
    <location>
        <begin position="1"/>
        <end position="24"/>
    </location>
</feature>
<feature type="cross-link" description="Pyrroloquinoline quinone (Glu-Tyr)" evidence="3">
    <location>
        <begin position="16"/>
        <end position="20"/>
    </location>
</feature>
<feature type="mutagenesis site" description="Abolishes PQQ biosynthesis." evidence="2">
    <original>E</original>
    <variation>D</variation>
    <location>
        <position position="16"/>
    </location>
</feature>
<feature type="mutagenesis site" description="Abolishes PQQ biosynthesis." evidence="2">
    <original>Y</original>
    <variation>F</variation>
    <location>
        <position position="20"/>
    </location>
</feature>
<gene>
    <name type="primary">pqqA</name>
    <name type="synonym">pqqIV</name>
</gene>
<comment type="function">
    <text evidence="1 2">Required for coenzyme pyrroloquinoline quinone (PQQ) biosynthesis. PQQ is probably formed by cross-linking a specific glutamate to a specific tyrosine residue and excising these residues from the peptide (By similarity).</text>
</comment>
<comment type="pathway">
    <text>Cofactor biosynthesis; pyrroloquinoline quinone biosynthesis.</text>
</comment>
<comment type="similarity">
    <text evidence="3">Belongs to the PqqA family.</text>
</comment>
<proteinExistence type="evidence at protein level"/>
<keyword id="KW-0884">PQQ biosynthesis</keyword>
<accession>P27532</accession>
<dbReference type="EMBL" id="X06452">
    <property type="status" value="NOT_ANNOTATED_CDS"/>
    <property type="molecule type" value="Genomic_DNA"/>
</dbReference>
<dbReference type="PIR" id="B32252">
    <property type="entry name" value="B32252"/>
</dbReference>
<dbReference type="RefSeq" id="WP_001982218.1">
    <property type="nucleotide sequence ID" value="NZ_UFSJ01000001.1"/>
</dbReference>
<dbReference type="STRING" id="471.BUM88_09580"/>
<dbReference type="GeneID" id="92919613"/>
<dbReference type="UniPathway" id="UPA00539"/>
<dbReference type="GO" id="GO:0018189">
    <property type="term" value="P:pyrroloquinoline quinone biosynthetic process"/>
    <property type="evidence" value="ECO:0007669"/>
    <property type="project" value="UniProtKB-UniRule"/>
</dbReference>
<dbReference type="HAMAP" id="MF_00656">
    <property type="entry name" value="PQQ_syn_PqqA"/>
    <property type="match status" value="1"/>
</dbReference>
<dbReference type="InterPro" id="IPR011725">
    <property type="entry name" value="PQQ_synth_PqqA"/>
</dbReference>
<dbReference type="NCBIfam" id="TIGR02107">
    <property type="entry name" value="PQQ_syn_pqqA"/>
    <property type="match status" value="1"/>
</dbReference>
<dbReference type="Pfam" id="PF08042">
    <property type="entry name" value="PqqA"/>
    <property type="match status" value="1"/>
</dbReference>
<sequence>MQWTKPAFTDLRIGFEVTMYFEAR</sequence>
<protein>
    <recommendedName>
        <fullName>Coenzyme PQQ synthesis protein A</fullName>
    </recommendedName>
    <alternativeName>
        <fullName>Coenzyme PQQ synthesis protein IV</fullName>
    </alternativeName>
    <alternativeName>
        <fullName>Pyrroloquinoline quinone biosynthesis protein A</fullName>
    </alternativeName>
</protein>